<evidence type="ECO:0000255" key="1">
    <source>
        <dbReference type="PROSITE-ProRule" id="PRU00679"/>
    </source>
</evidence>
<evidence type="ECO:0000269" key="2">
    <source ref="4"/>
</evidence>
<evidence type="ECO:0007744" key="3">
    <source>
        <dbReference type="PDB" id="4IF2"/>
    </source>
</evidence>
<evidence type="ECO:0007829" key="4">
    <source>
        <dbReference type="PDB" id="4IF2"/>
    </source>
</evidence>
<keyword id="KW-0002">3D-structure</keyword>
<keyword id="KW-0378">Hydrolase</keyword>
<keyword id="KW-0479">Metal-binding</keyword>
<keyword id="KW-1185">Reference proteome</keyword>
<keyword id="KW-0862">Zinc</keyword>
<sequence length="326" mass="35886">MPELNTARGPIDTADLGVTLMHEHVFIMTTEIAQNYPEAWGDEDKRVAGAIARLGELKARGVDTIVDLTVIGLGRYIPRIARVAAATELNIVVATGLYTYNDVPFYFHYLGPGAQLDGPEIMTDMFVRDIEHGIADTGIKAGILKCATDEPGLTPGVERVLRAVAQAHKRTGAPISTHTHAGLRRGLDQQRIFAEEGVDLSRVVIGHCGDSTDVGYLEELIAAGSYLGMDRFGVDVISPFQDRVNIVARMCERGHADKMVLSHDACCYFDALPEELVPVAMPNWHYLHIHNDVIPALKQHGVTDEQLHTMLVDNPRRIFERQGGYQ</sequence>
<protein>
    <recommendedName>
        <fullName>Phosphotriesterase homology protein</fullName>
    </recommendedName>
</protein>
<dbReference type="EMBL" id="AL123456">
    <property type="protein sequence ID" value="CCP42958.1"/>
    <property type="molecule type" value="Genomic_DNA"/>
</dbReference>
<dbReference type="PIR" id="D70962">
    <property type="entry name" value="D70962"/>
</dbReference>
<dbReference type="RefSeq" id="NP_214744.1">
    <property type="nucleotide sequence ID" value="NC_000962.3"/>
</dbReference>
<dbReference type="RefSeq" id="WP_003900835.1">
    <property type="nucleotide sequence ID" value="NZ_NVQJ01000001.1"/>
</dbReference>
<dbReference type="PDB" id="4IF2">
    <property type="method" value="X-ray"/>
    <property type="resolution" value="2.27 A"/>
    <property type="chains" value="A=1-326"/>
</dbReference>
<dbReference type="PDBsum" id="4IF2"/>
<dbReference type="SMR" id="P9WHN9"/>
<dbReference type="FunCoup" id="P9WHN9">
    <property type="interactions" value="17"/>
</dbReference>
<dbReference type="STRING" id="83332.Rv0230c"/>
<dbReference type="PaxDb" id="83332-Rv0230c"/>
<dbReference type="DNASU" id="886705"/>
<dbReference type="GeneID" id="886705"/>
<dbReference type="KEGG" id="mtu:Rv0230c"/>
<dbReference type="KEGG" id="mtv:RVBD_0230c"/>
<dbReference type="TubercuList" id="Rv0230c"/>
<dbReference type="eggNOG" id="COG1735">
    <property type="taxonomic scope" value="Bacteria"/>
</dbReference>
<dbReference type="InParanoid" id="P9WHN9"/>
<dbReference type="OrthoDB" id="9795018at2"/>
<dbReference type="PhylomeDB" id="P9WHN9"/>
<dbReference type="BRENDA" id="3.1.8.1">
    <property type="organism ID" value="3445"/>
</dbReference>
<dbReference type="EvolutionaryTrace" id="P9WHN9"/>
<dbReference type="Proteomes" id="UP000001584">
    <property type="component" value="Chromosome"/>
</dbReference>
<dbReference type="GO" id="GO:0016788">
    <property type="term" value="F:hydrolase activity, acting on ester bonds"/>
    <property type="evidence" value="ECO:0007669"/>
    <property type="project" value="InterPro"/>
</dbReference>
<dbReference type="GO" id="GO:0008270">
    <property type="term" value="F:zinc ion binding"/>
    <property type="evidence" value="ECO:0007669"/>
    <property type="project" value="InterPro"/>
</dbReference>
<dbReference type="GO" id="GO:0009056">
    <property type="term" value="P:catabolic process"/>
    <property type="evidence" value="ECO:0007669"/>
    <property type="project" value="InterPro"/>
</dbReference>
<dbReference type="CDD" id="cd00530">
    <property type="entry name" value="PTE"/>
    <property type="match status" value="1"/>
</dbReference>
<dbReference type="Gene3D" id="3.20.20.140">
    <property type="entry name" value="Metal-dependent hydrolases"/>
    <property type="match status" value="1"/>
</dbReference>
<dbReference type="InterPro" id="IPR017947">
    <property type="entry name" value="AryldialkylPase_Zn-BS"/>
</dbReference>
<dbReference type="InterPro" id="IPR032466">
    <property type="entry name" value="Metal_Hydrolase"/>
</dbReference>
<dbReference type="InterPro" id="IPR001559">
    <property type="entry name" value="Phosphotriesterase"/>
</dbReference>
<dbReference type="PANTHER" id="PTHR10819">
    <property type="entry name" value="PHOSPHOTRIESTERASE-RELATED"/>
    <property type="match status" value="1"/>
</dbReference>
<dbReference type="PANTHER" id="PTHR10819:SF3">
    <property type="entry name" value="PHOSPHOTRIESTERASE-RELATED PROTEIN"/>
    <property type="match status" value="1"/>
</dbReference>
<dbReference type="Pfam" id="PF02126">
    <property type="entry name" value="PTE"/>
    <property type="match status" value="1"/>
</dbReference>
<dbReference type="SUPFAM" id="SSF51556">
    <property type="entry name" value="Metallo-dependent hydrolases"/>
    <property type="match status" value="1"/>
</dbReference>
<dbReference type="PROSITE" id="PS01322">
    <property type="entry name" value="PHOSPHOTRIESTERASE_1"/>
    <property type="match status" value="1"/>
</dbReference>
<dbReference type="PROSITE" id="PS51347">
    <property type="entry name" value="PHOSPHOTRIESTERASE_2"/>
    <property type="match status" value="1"/>
</dbReference>
<name>PHP_MYCTU</name>
<proteinExistence type="evidence at protein level"/>
<organism>
    <name type="scientific">Mycobacterium tuberculosis (strain ATCC 25618 / H37Rv)</name>
    <dbReference type="NCBI Taxonomy" id="83332"/>
    <lineage>
        <taxon>Bacteria</taxon>
        <taxon>Bacillati</taxon>
        <taxon>Actinomycetota</taxon>
        <taxon>Actinomycetes</taxon>
        <taxon>Mycobacteriales</taxon>
        <taxon>Mycobacteriaceae</taxon>
        <taxon>Mycobacterium</taxon>
        <taxon>Mycobacterium tuberculosis complex</taxon>
    </lineage>
</organism>
<feature type="chain" id="PRO_0000205363" description="Phosphotriesterase homology protein">
    <location>
        <begin position="1"/>
        <end position="326"/>
    </location>
</feature>
<feature type="binding site" evidence="1 2 3">
    <location>
        <position position="22"/>
    </location>
    <ligand>
        <name>Zn(2+)</name>
        <dbReference type="ChEBI" id="CHEBI:29105"/>
        <label>1</label>
    </ligand>
</feature>
<feature type="binding site" evidence="1 2 3">
    <location>
        <position position="24"/>
    </location>
    <ligand>
        <name>Zn(2+)</name>
        <dbReference type="ChEBI" id="CHEBI:29105"/>
        <label>1</label>
    </ligand>
</feature>
<feature type="binding site" description="via carbamate group" evidence="1 2 3">
    <location>
        <position position="145"/>
    </location>
    <ligand>
        <name>Zn(2+)</name>
        <dbReference type="ChEBI" id="CHEBI:29105"/>
        <label>1</label>
    </ligand>
</feature>
<feature type="binding site" description="via carbamate group" evidence="1 2 3">
    <location>
        <position position="145"/>
    </location>
    <ligand>
        <name>Zn(2+)</name>
        <dbReference type="ChEBI" id="CHEBI:29105"/>
        <label>2</label>
    </ligand>
</feature>
<feature type="binding site" evidence="1 2 3">
    <location>
        <position position="178"/>
    </location>
    <ligand>
        <name>Zn(2+)</name>
        <dbReference type="ChEBI" id="CHEBI:29105"/>
        <label>2</label>
    </ligand>
</feature>
<feature type="binding site" evidence="1 2 3">
    <location>
        <position position="207"/>
    </location>
    <ligand>
        <name>Zn(2+)</name>
        <dbReference type="ChEBI" id="CHEBI:29105"/>
        <label>2</label>
    </ligand>
</feature>
<feature type="binding site" evidence="1 2 3">
    <location>
        <position position="264"/>
    </location>
    <ligand>
        <name>Zn(2+)</name>
        <dbReference type="ChEBI" id="CHEBI:29105"/>
        <label>1</label>
    </ligand>
</feature>
<feature type="modified residue" description="N6-carboxylysine" evidence="1 2 3">
    <location>
        <position position="145"/>
    </location>
</feature>
<feature type="helix" evidence="4">
    <location>
        <begin position="13"/>
        <end position="15"/>
    </location>
</feature>
<feature type="strand" evidence="4">
    <location>
        <begin position="18"/>
        <end position="23"/>
    </location>
</feature>
<feature type="strand" evidence="4">
    <location>
        <begin position="25"/>
        <end position="27"/>
    </location>
</feature>
<feature type="helix" evidence="4">
    <location>
        <begin position="30"/>
        <end position="35"/>
    </location>
</feature>
<feature type="turn" evidence="4">
    <location>
        <begin position="37"/>
        <end position="40"/>
    </location>
</feature>
<feature type="helix" evidence="4">
    <location>
        <begin position="43"/>
        <end position="59"/>
    </location>
</feature>
<feature type="strand" evidence="4">
    <location>
        <begin position="64"/>
        <end position="67"/>
    </location>
</feature>
<feature type="turn" evidence="4">
    <location>
        <begin position="72"/>
        <end position="74"/>
    </location>
</feature>
<feature type="helix" evidence="4">
    <location>
        <begin position="77"/>
        <end position="84"/>
    </location>
</feature>
<feature type="strand" evidence="4">
    <location>
        <begin position="88"/>
        <end position="92"/>
    </location>
</feature>
<feature type="strand" evidence="4">
    <location>
        <begin position="94"/>
        <end position="97"/>
    </location>
</feature>
<feature type="helix" evidence="4">
    <location>
        <begin position="105"/>
        <end position="107"/>
    </location>
</feature>
<feature type="strand" evidence="4">
    <location>
        <begin position="108"/>
        <end position="111"/>
    </location>
</feature>
<feature type="strand" evidence="4">
    <location>
        <begin position="114"/>
        <end position="116"/>
    </location>
</feature>
<feature type="helix" evidence="4">
    <location>
        <begin position="122"/>
        <end position="131"/>
    </location>
</feature>
<feature type="turn" evidence="4">
    <location>
        <begin position="135"/>
        <end position="137"/>
    </location>
</feature>
<feature type="strand" evidence="4">
    <location>
        <begin position="143"/>
        <end position="148"/>
    </location>
</feature>
<feature type="helix" evidence="4">
    <location>
        <begin position="155"/>
        <end position="171"/>
    </location>
</feature>
<feature type="strand" evidence="4">
    <location>
        <begin position="175"/>
        <end position="179"/>
    </location>
</feature>
<feature type="turn" evidence="4">
    <location>
        <begin position="181"/>
        <end position="184"/>
    </location>
</feature>
<feature type="helix" evidence="4">
    <location>
        <begin position="185"/>
        <end position="195"/>
    </location>
</feature>
<feature type="helix" evidence="4">
    <location>
        <begin position="200"/>
        <end position="202"/>
    </location>
</feature>
<feature type="strand" evidence="4">
    <location>
        <begin position="203"/>
        <end position="205"/>
    </location>
</feature>
<feature type="helix" evidence="4">
    <location>
        <begin position="208"/>
        <end position="210"/>
    </location>
</feature>
<feature type="helix" evidence="4">
    <location>
        <begin position="214"/>
        <end position="222"/>
    </location>
</feature>
<feature type="strand" evidence="4">
    <location>
        <begin position="226"/>
        <end position="229"/>
    </location>
</feature>
<feature type="turn" evidence="4">
    <location>
        <begin position="235"/>
        <end position="237"/>
    </location>
</feature>
<feature type="helix" evidence="4">
    <location>
        <begin position="240"/>
        <end position="252"/>
    </location>
</feature>
<feature type="helix" evidence="4">
    <location>
        <begin position="256"/>
        <end position="258"/>
    </location>
</feature>
<feature type="strand" evidence="4">
    <location>
        <begin position="259"/>
        <end position="261"/>
    </location>
</feature>
<feature type="strand" evidence="4">
    <location>
        <begin position="267"/>
        <end position="269"/>
    </location>
</feature>
<feature type="turn" evidence="4">
    <location>
        <begin position="274"/>
        <end position="276"/>
    </location>
</feature>
<feature type="helix" evidence="4">
    <location>
        <begin position="277"/>
        <end position="280"/>
    </location>
</feature>
<feature type="helix" evidence="4">
    <location>
        <begin position="288"/>
        <end position="291"/>
    </location>
</feature>
<feature type="helix" evidence="4">
    <location>
        <begin position="293"/>
        <end position="299"/>
    </location>
</feature>
<feature type="helix" evidence="4">
    <location>
        <begin position="304"/>
        <end position="311"/>
    </location>
</feature>
<feature type="helix" evidence="4">
    <location>
        <begin position="313"/>
        <end position="320"/>
    </location>
</feature>
<reference key="1">
    <citation type="journal article" date="1998" name="Nature">
        <title>Deciphering the biology of Mycobacterium tuberculosis from the complete genome sequence.</title>
        <authorList>
            <person name="Cole S.T."/>
            <person name="Brosch R."/>
            <person name="Parkhill J."/>
            <person name="Garnier T."/>
            <person name="Churcher C.M."/>
            <person name="Harris D.E."/>
            <person name="Gordon S.V."/>
            <person name="Eiglmeier K."/>
            <person name="Gas S."/>
            <person name="Barry C.E. III"/>
            <person name="Tekaia F."/>
            <person name="Badcock K."/>
            <person name="Basham D."/>
            <person name="Brown D."/>
            <person name="Chillingworth T."/>
            <person name="Connor R."/>
            <person name="Davies R.M."/>
            <person name="Devlin K."/>
            <person name="Feltwell T."/>
            <person name="Gentles S."/>
            <person name="Hamlin N."/>
            <person name="Holroyd S."/>
            <person name="Hornsby T."/>
            <person name="Jagels K."/>
            <person name="Krogh A."/>
            <person name="McLean J."/>
            <person name="Moule S."/>
            <person name="Murphy L.D."/>
            <person name="Oliver S."/>
            <person name="Osborne J."/>
            <person name="Quail M.A."/>
            <person name="Rajandream M.A."/>
            <person name="Rogers J."/>
            <person name="Rutter S."/>
            <person name="Seeger K."/>
            <person name="Skelton S."/>
            <person name="Squares S."/>
            <person name="Squares R."/>
            <person name="Sulston J.E."/>
            <person name="Taylor K."/>
            <person name="Whitehead S."/>
            <person name="Barrell B.G."/>
        </authorList>
    </citation>
    <scope>NUCLEOTIDE SEQUENCE [LARGE SCALE GENOMIC DNA]</scope>
    <source>
        <strain>ATCC 25618 / H37Rv</strain>
    </source>
</reference>
<reference key="2">
    <citation type="journal article" date="2008" name="BMC Syst. Biol.">
        <title>targetTB: a target identification pipeline for Mycobacterium tuberculosis through an interactome, reactome and genome-scale structural analysis.</title>
        <authorList>
            <person name="Raman K."/>
            <person name="Yeturu K."/>
            <person name="Chandra N."/>
        </authorList>
    </citation>
    <scope>IDENTIFICATION AS A DRUG TARGET [LARGE SCALE ANALYSIS]</scope>
</reference>
<reference key="3">
    <citation type="journal article" date="2011" name="Mol. Cell. Proteomics">
        <title>Proteogenomic analysis of Mycobacterium tuberculosis by high resolution mass spectrometry.</title>
        <authorList>
            <person name="Kelkar D.S."/>
            <person name="Kumar D."/>
            <person name="Kumar P."/>
            <person name="Balakrishnan L."/>
            <person name="Muthusamy B."/>
            <person name="Yadav A.K."/>
            <person name="Shrivastava P."/>
            <person name="Marimuthu A."/>
            <person name="Anand S."/>
            <person name="Sundaram H."/>
            <person name="Kingsbury R."/>
            <person name="Harsha H.C."/>
            <person name="Nair B."/>
            <person name="Prasad T.S."/>
            <person name="Chauhan D.S."/>
            <person name="Katoch K."/>
            <person name="Katoch V.M."/>
            <person name="Kumar P."/>
            <person name="Chaerkady R."/>
            <person name="Ramachandran S."/>
            <person name="Dash D."/>
            <person name="Pandey A."/>
        </authorList>
    </citation>
    <scope>IDENTIFICATION BY MASS SPECTROMETRY [LARGE SCALE ANALYSIS]</scope>
    <source>
        <strain>ATCC 25618 / H37Rv</strain>
    </source>
</reference>
<reference key="4">
    <citation type="submission" date="2012-12" db="PDB data bank">
        <title>Crystallization and structure of the phosphotriesterase from Mycobacterium tuberculosis.</title>
        <authorList>
            <person name="Zhang L."/>
            <person name="Li X."/>
            <person name="Rao Z.H."/>
        </authorList>
    </citation>
    <scope>X-RAY CRYSTALLOGRAPHY (2.27 ANGSTROMS) IN COMPLEX WITH ZINC</scope>
    <scope>CARBOXYLATION AT LYS-145</scope>
</reference>
<accession>P9WHN9</accession>
<accession>L0T4R7</accession>
<accession>P96413</accession>
<gene>
    <name type="primary">php</name>
    <name type="ordered locus">Rv0230c</name>
    <name type="ORF">MTCY08D5.26c</name>
</gene>
<comment type="cofactor">
    <cofactor evidence="1">
        <name>Zn(2+)</name>
        <dbReference type="ChEBI" id="CHEBI:29105"/>
    </cofactor>
    <text evidence="1">Binds 2 Zn(2+) ions per subunit.</text>
</comment>
<comment type="miscellaneous">
    <text>Was identified as a high-confidence drug target.</text>
</comment>
<comment type="similarity">
    <text evidence="1">Belongs to the metallo-dependent hydrolases superfamily. Phosphotriesterase family.</text>
</comment>